<geneLocation type="mitochondrion"/>
<gene>
    <name type="ORF">NCU16019</name>
</gene>
<sequence length="304" mass="34881">MIKKMKSYINMNSTVTTLGANYLVHTGYFNTISRLKVCTIASYRYYSTSKSDSQSSDLPPVPIFTINNLNNKDSIKSSRILLKDKGGIYSFINTVNNNQYIGSAKDFYLRLNEHLENKKSNIALQKAFTKYGLDKFIFCIYEYFTYESKIISHKALTDLETSYINRFNFDNLYNFKAIATSSLGYKHTEEARLKMVDYYKDKNNHPMFGKTHTEEALGLISKPGELNPMFGKKHSEATKASMSEKKNKYPLGVGIYDLEDNLILKFSNNVELAKYLGISKVTVGKYLNSGLVYNKTYRFKPIQD</sequence>
<feature type="chain" id="PRO_0000414733" description="Probable intron-encoded endonuclease 1">
    <location>
        <begin position="1"/>
        <end position="304"/>
    </location>
</feature>
<feature type="domain" description="GIY-YIG" evidence="2">
    <location>
        <begin position="84"/>
        <end position="175"/>
    </location>
</feature>
<reference key="1">
    <citation type="journal article" date="1985" name="J. Mol. Biol.">
        <title>The mitochondrial URF1 gene in Neurospora crassa has an intron that contains a novel type of URF.</title>
        <authorList>
            <person name="Burger G."/>
            <person name="Werner S."/>
        </authorList>
    </citation>
    <scope>NUCLEOTIDE SEQUENCE [GENOMIC DNA]</scope>
</reference>
<reference key="2">
    <citation type="journal article" date="2003" name="Nature">
        <title>The genome sequence of the filamentous fungus Neurospora crassa.</title>
        <authorList>
            <person name="Galagan J.E."/>
            <person name="Calvo S.E."/>
            <person name="Borkovich K.A."/>
            <person name="Selker E.U."/>
            <person name="Read N.D."/>
            <person name="Jaffe D.B."/>
            <person name="FitzHugh W."/>
            <person name="Ma L.-J."/>
            <person name="Smirnov S."/>
            <person name="Purcell S."/>
            <person name="Rehman B."/>
            <person name="Elkins T."/>
            <person name="Engels R."/>
            <person name="Wang S."/>
            <person name="Nielsen C.B."/>
            <person name="Butler J."/>
            <person name="Endrizzi M."/>
            <person name="Qui D."/>
            <person name="Ianakiev P."/>
            <person name="Bell-Pedersen D."/>
            <person name="Nelson M.A."/>
            <person name="Werner-Washburne M."/>
            <person name="Selitrennikoff C.P."/>
            <person name="Kinsey J.A."/>
            <person name="Braun E.L."/>
            <person name="Zelter A."/>
            <person name="Schulte U."/>
            <person name="Kothe G.O."/>
            <person name="Jedd G."/>
            <person name="Mewes H.-W."/>
            <person name="Staben C."/>
            <person name="Marcotte E."/>
            <person name="Greenberg D."/>
            <person name="Roy A."/>
            <person name="Foley K."/>
            <person name="Naylor J."/>
            <person name="Stange-Thomann N."/>
            <person name="Barrett R."/>
            <person name="Gnerre S."/>
            <person name="Kamal M."/>
            <person name="Kamvysselis M."/>
            <person name="Mauceli E.W."/>
            <person name="Bielke C."/>
            <person name="Rudd S."/>
            <person name="Frishman D."/>
            <person name="Krystofova S."/>
            <person name="Rasmussen C."/>
            <person name="Metzenberg R.L."/>
            <person name="Perkins D.D."/>
            <person name="Kroken S."/>
            <person name="Cogoni C."/>
            <person name="Macino G."/>
            <person name="Catcheside D.E.A."/>
            <person name="Li W."/>
            <person name="Pratt R.J."/>
            <person name="Osmani S.A."/>
            <person name="DeSouza C.P.C."/>
            <person name="Glass N.L."/>
            <person name="Orbach M.J."/>
            <person name="Berglund J.A."/>
            <person name="Voelker R."/>
            <person name="Yarden O."/>
            <person name="Plamann M."/>
            <person name="Seiler S."/>
            <person name="Dunlap J.C."/>
            <person name="Radford A."/>
            <person name="Aramayo R."/>
            <person name="Natvig D.O."/>
            <person name="Alex L.A."/>
            <person name="Mannhaupt G."/>
            <person name="Ebbole D.J."/>
            <person name="Freitag M."/>
            <person name="Paulsen I."/>
            <person name="Sachs M.S."/>
            <person name="Lander E.S."/>
            <person name="Nusbaum C."/>
            <person name="Birren B.W."/>
        </authorList>
    </citation>
    <scope>NUCLEOTIDE SEQUENCE [LARGE SCALE GENOMIC DNA]</scope>
    <source>
        <strain>ATCC 24698 / 74-OR23-1A / CBS 708.71 / DSM 1257 / FGSC 987</strain>
    </source>
</reference>
<reference key="3">
    <citation type="book" date="2004" name="The Mycota II, Genetics and Biotechnology (2nd edition)">
        <title>Mitochondrial genetics of Neurospora.</title>
        <editorList>
            <person name="Kueck U."/>
        </editorList>
        <authorList>
            <person name="Kennell J.C."/>
            <person name="Collins R.A."/>
            <person name="Griffiths A.J.F."/>
            <person name="Nargang F.E."/>
        </authorList>
    </citation>
    <scope>GENOME REANNOTATION</scope>
    <source>
        <strain>ATCC 24698 / 74-OR23-1A / CBS 708.71 / DSM 1257 / FGSC 987</strain>
    </source>
</reference>
<keyword id="KW-0255">Endonuclease</keyword>
<keyword id="KW-0378">Hydrolase</keyword>
<keyword id="KW-0404">Intron homing</keyword>
<keyword id="KW-0496">Mitochondrion</keyword>
<keyword id="KW-0540">Nuclease</keyword>
<keyword id="KW-1185">Reference proteome</keyword>
<organism>
    <name type="scientific">Neurospora crassa (strain ATCC 24698 / 74-OR23-1A / CBS 708.71 / DSM 1257 / FGSC 987)</name>
    <dbReference type="NCBI Taxonomy" id="367110"/>
    <lineage>
        <taxon>Eukaryota</taxon>
        <taxon>Fungi</taxon>
        <taxon>Dikarya</taxon>
        <taxon>Ascomycota</taxon>
        <taxon>Pezizomycotina</taxon>
        <taxon>Sordariomycetes</taxon>
        <taxon>Sordariomycetidae</taxon>
        <taxon>Sordariales</taxon>
        <taxon>Sordariaceae</taxon>
        <taxon>Neurospora</taxon>
    </lineage>
</organism>
<proteinExistence type="inferred from homology"/>
<accession>Q36580</accession>
<accession>M1QL68</accession>
<evidence type="ECO:0000250" key="1"/>
<evidence type="ECO:0000255" key="2">
    <source>
        <dbReference type="PROSITE-ProRule" id="PRU00977"/>
    </source>
</evidence>
<evidence type="ECO:0000305" key="3"/>
<dbReference type="EC" id="3.1.-.-"/>
<dbReference type="EMBL" id="X03280">
    <property type="protein sequence ID" value="CAA27030.1"/>
    <property type="molecule type" value="Genomic_DNA"/>
</dbReference>
<dbReference type="EMBL" id="KC683708">
    <property type="protein sequence ID" value="AGG16008.1"/>
    <property type="molecule type" value="Genomic_DNA"/>
</dbReference>
<dbReference type="PIR" id="B23431">
    <property type="entry name" value="B23431"/>
</dbReference>
<dbReference type="RefSeq" id="YP_009126720.1">
    <property type="nucleotide sequence ID" value="NC_026614.1"/>
</dbReference>
<dbReference type="SMR" id="Q36580"/>
<dbReference type="EnsemblFungi" id="AGG16008">
    <property type="protein sequence ID" value="AGG16008"/>
    <property type="gene ID" value="NCU16019"/>
</dbReference>
<dbReference type="GeneID" id="23681574"/>
<dbReference type="KEGG" id="ncr:NCU16019"/>
<dbReference type="VEuPathDB" id="FungiDB:NCU16019"/>
<dbReference type="InParanoid" id="Q36580"/>
<dbReference type="OrthoDB" id="5274807at2759"/>
<dbReference type="Proteomes" id="UP000001805">
    <property type="component" value="Mitochondrion"/>
</dbReference>
<dbReference type="GO" id="GO:0005739">
    <property type="term" value="C:mitochondrion"/>
    <property type="evidence" value="ECO:0007669"/>
    <property type="project" value="UniProtKB-SubCell"/>
</dbReference>
<dbReference type="GO" id="GO:0003677">
    <property type="term" value="F:DNA binding"/>
    <property type="evidence" value="ECO:0007669"/>
    <property type="project" value="InterPro"/>
</dbReference>
<dbReference type="GO" id="GO:0004519">
    <property type="term" value="F:endonuclease activity"/>
    <property type="evidence" value="ECO:0007669"/>
    <property type="project" value="UniProtKB-KW"/>
</dbReference>
<dbReference type="GO" id="GO:0006314">
    <property type="term" value="P:intron homing"/>
    <property type="evidence" value="ECO:0007669"/>
    <property type="project" value="UniProtKB-KW"/>
</dbReference>
<dbReference type="Gene3D" id="3.40.1440.10">
    <property type="entry name" value="GIY-YIG endonuclease"/>
    <property type="match status" value="1"/>
</dbReference>
<dbReference type="InterPro" id="IPR000305">
    <property type="entry name" value="GIY-YIG_endonuc"/>
</dbReference>
<dbReference type="InterPro" id="IPR035901">
    <property type="entry name" value="GIY-YIG_endonuc_sf"/>
</dbReference>
<dbReference type="InterPro" id="IPR006350">
    <property type="entry name" value="Intron_endoG1"/>
</dbReference>
<dbReference type="InterPro" id="IPR003647">
    <property type="entry name" value="Intron_nuc_1_rpt"/>
</dbReference>
<dbReference type="InterPro" id="IPR010896">
    <property type="entry name" value="NUMOD1"/>
</dbReference>
<dbReference type="InterPro" id="IPR003611">
    <property type="entry name" value="NUMOD3"/>
</dbReference>
<dbReference type="NCBIfam" id="TIGR01453">
    <property type="entry name" value="grpIintron_endo"/>
    <property type="match status" value="1"/>
</dbReference>
<dbReference type="Pfam" id="PF01541">
    <property type="entry name" value="GIY-YIG"/>
    <property type="match status" value="1"/>
</dbReference>
<dbReference type="Pfam" id="PF07453">
    <property type="entry name" value="NUMOD1"/>
    <property type="match status" value="1"/>
</dbReference>
<dbReference type="Pfam" id="PF07460">
    <property type="entry name" value="NUMOD3"/>
    <property type="match status" value="2"/>
</dbReference>
<dbReference type="SMART" id="SM00465">
    <property type="entry name" value="GIYc"/>
    <property type="match status" value="1"/>
</dbReference>
<dbReference type="SMART" id="SM00497">
    <property type="entry name" value="IENR1"/>
    <property type="match status" value="1"/>
</dbReference>
<dbReference type="SMART" id="SM00496">
    <property type="entry name" value="IENR2"/>
    <property type="match status" value="3"/>
</dbReference>
<dbReference type="SUPFAM" id="SSF64496">
    <property type="entry name" value="DNA-binding domain of intron-encoded endonucleases"/>
    <property type="match status" value="2"/>
</dbReference>
<dbReference type="SUPFAM" id="SSF82771">
    <property type="entry name" value="GIY-YIG endonuclease"/>
    <property type="match status" value="1"/>
</dbReference>
<dbReference type="PROSITE" id="PS50164">
    <property type="entry name" value="GIY_YIG"/>
    <property type="match status" value="1"/>
</dbReference>
<comment type="function">
    <text evidence="1">Mitochondrial DNA endonuclease involved in intron homing.</text>
</comment>
<comment type="subcellular location">
    <subcellularLocation>
        <location>Mitochondrion</location>
    </subcellularLocation>
</comment>
<comment type="miscellaneous">
    <text>Encoded within intron 1 of ndh-1.</text>
</comment>
<comment type="similarity">
    <text evidence="3">To endonucleases of group I introns of fungi and phage.</text>
</comment>
<protein>
    <recommendedName>
        <fullName>Probable intron-encoded endonuclease 1</fullName>
        <ecNumber>3.1.-.-</ecNumber>
    </recommendedName>
</protein>
<name>IEND1_NEUCR</name>